<reference key="1">
    <citation type="journal article" date="2006" name="J. Bacteriol.">
        <title>Comparative genomic analysis of three strains of Ehrlichia ruminantium reveals an active process of genome size plasticity.</title>
        <authorList>
            <person name="Frutos R."/>
            <person name="Viari A."/>
            <person name="Ferraz C."/>
            <person name="Morgat A."/>
            <person name="Eychenie S."/>
            <person name="Kandassamy Y."/>
            <person name="Chantal I."/>
            <person name="Bensaid A."/>
            <person name="Coissac E."/>
            <person name="Vachiery N."/>
            <person name="Demaille J."/>
            <person name="Martinez D."/>
        </authorList>
    </citation>
    <scope>NUCLEOTIDE SEQUENCE [LARGE SCALE GENOMIC DNA]</scope>
    <source>
        <strain>Gardel</strain>
    </source>
</reference>
<sequence>MRFTLSWLMQYLDTDASLDFIISKLSDIGLEVDSVDCKKHLQSFVVVEVIDVVPHHAADKLKVCQVYDGVQTFQVVCGASNVKVGMKSVLAYVGSVIPKNQTVIKVAKLRGVDSYGMLCSRDELGITENDSTDEGIIELSDNTYNVGESFFSCDPVIELNITPNRGDCLGVYGIARDLAAAGVGKLKSVNFCDITFDNTCYISPIEICLEVQGVVKGVYIKGIRNCETPKWLKEYLFSCGVKSISCVVDIINYIMLSFNRPLHIYDADKIAGKLVFRKIDDQIEFFALNDKKYLLGKENIIAVDLANRIHSIVGVIGSEYSKCLFDTENIFLECAWFDPVDIALSSRKIKLSTDSSYRLERFVDPEFLQDGLKLATKMILEYCGGSPSSIVSVQNYVHNDILLNFSPDSVRNIGSVSITRDEIFDFLCNIGCVVKNHDCDIWIVIPPSWRSDLKHSFDLVEEVLRLYGYDKILENPIPISNIEFPDNLHNKLRSVLLSQGMMEVVTWSFTNLEFAKKFGYDSDIMLIDNPINNNMNLMRPSVLLNLLQVISENQAYGNNDAAIFEIGQIYNINSVCGDNNYVVSGVRYGDNLPRNFYKTDRSVDIFDVKSDFFKVLQEMNIGYDSVDLVRSTKSYLHPMKSADVYFNNILIGYFGELHPSIVHLYEIKRPIVCFEVFLYKIPVVDLTRKEFVELRYQSVKRDFAFLVSKNVNIQCLIEVAKKTNVQLIEDVSIFDIYEGNGIDKGMLSVALSVTFRSVDHTLNDQEIKDASDLIISAISKGFNGILRSC</sequence>
<name>SYFB_EHRRG</name>
<protein>
    <recommendedName>
        <fullName evidence="1">Phenylalanine--tRNA ligase beta subunit</fullName>
        <ecNumber evidence="1">6.1.1.20</ecNumber>
    </recommendedName>
    <alternativeName>
        <fullName evidence="1">Phenylalanyl-tRNA synthetase beta subunit</fullName>
        <shortName evidence="1">PheRS</shortName>
    </alternativeName>
</protein>
<comment type="catalytic activity">
    <reaction evidence="1">
        <text>tRNA(Phe) + L-phenylalanine + ATP = L-phenylalanyl-tRNA(Phe) + AMP + diphosphate + H(+)</text>
        <dbReference type="Rhea" id="RHEA:19413"/>
        <dbReference type="Rhea" id="RHEA-COMP:9668"/>
        <dbReference type="Rhea" id="RHEA-COMP:9699"/>
        <dbReference type="ChEBI" id="CHEBI:15378"/>
        <dbReference type="ChEBI" id="CHEBI:30616"/>
        <dbReference type="ChEBI" id="CHEBI:33019"/>
        <dbReference type="ChEBI" id="CHEBI:58095"/>
        <dbReference type="ChEBI" id="CHEBI:78442"/>
        <dbReference type="ChEBI" id="CHEBI:78531"/>
        <dbReference type="ChEBI" id="CHEBI:456215"/>
        <dbReference type="EC" id="6.1.1.20"/>
    </reaction>
</comment>
<comment type="cofactor">
    <cofactor evidence="1">
        <name>Mg(2+)</name>
        <dbReference type="ChEBI" id="CHEBI:18420"/>
    </cofactor>
    <text evidence="1">Binds 2 magnesium ions per tetramer.</text>
</comment>
<comment type="subunit">
    <text evidence="1">Tetramer of two alpha and two beta subunits.</text>
</comment>
<comment type="subcellular location">
    <subcellularLocation>
        <location evidence="1">Cytoplasm</location>
    </subcellularLocation>
</comment>
<comment type="similarity">
    <text evidence="1">Belongs to the phenylalanyl-tRNA synthetase beta subunit family. Type 1 subfamily.</text>
</comment>
<gene>
    <name evidence="1" type="primary">pheT</name>
    <name type="ordered locus">ERGA_CDS_06040</name>
</gene>
<accession>Q5FFS3</accession>
<organism>
    <name type="scientific">Ehrlichia ruminantium (strain Gardel)</name>
    <dbReference type="NCBI Taxonomy" id="302409"/>
    <lineage>
        <taxon>Bacteria</taxon>
        <taxon>Pseudomonadati</taxon>
        <taxon>Pseudomonadota</taxon>
        <taxon>Alphaproteobacteria</taxon>
        <taxon>Rickettsiales</taxon>
        <taxon>Anaplasmataceae</taxon>
        <taxon>Ehrlichia</taxon>
    </lineage>
</organism>
<keyword id="KW-0030">Aminoacyl-tRNA synthetase</keyword>
<keyword id="KW-0067">ATP-binding</keyword>
<keyword id="KW-0963">Cytoplasm</keyword>
<keyword id="KW-0436">Ligase</keyword>
<keyword id="KW-0460">Magnesium</keyword>
<keyword id="KW-0479">Metal-binding</keyword>
<keyword id="KW-0547">Nucleotide-binding</keyword>
<keyword id="KW-0648">Protein biosynthesis</keyword>
<keyword id="KW-0694">RNA-binding</keyword>
<keyword id="KW-0820">tRNA-binding</keyword>
<dbReference type="EC" id="6.1.1.20" evidence="1"/>
<dbReference type="EMBL" id="CR925677">
    <property type="protein sequence ID" value="CAI28056.1"/>
    <property type="molecule type" value="Genomic_DNA"/>
</dbReference>
<dbReference type="RefSeq" id="WP_011255710.1">
    <property type="nucleotide sequence ID" value="NC_006831.1"/>
</dbReference>
<dbReference type="SMR" id="Q5FFS3"/>
<dbReference type="KEGG" id="erg:ERGA_CDS_06040"/>
<dbReference type="HOGENOM" id="CLU_016891_0_0_5"/>
<dbReference type="OrthoDB" id="9805455at2"/>
<dbReference type="Proteomes" id="UP000000533">
    <property type="component" value="Chromosome"/>
</dbReference>
<dbReference type="GO" id="GO:0009328">
    <property type="term" value="C:phenylalanine-tRNA ligase complex"/>
    <property type="evidence" value="ECO:0007669"/>
    <property type="project" value="TreeGrafter"/>
</dbReference>
<dbReference type="GO" id="GO:0005524">
    <property type="term" value="F:ATP binding"/>
    <property type="evidence" value="ECO:0007669"/>
    <property type="project" value="UniProtKB-UniRule"/>
</dbReference>
<dbReference type="GO" id="GO:0000287">
    <property type="term" value="F:magnesium ion binding"/>
    <property type="evidence" value="ECO:0007669"/>
    <property type="project" value="UniProtKB-UniRule"/>
</dbReference>
<dbReference type="GO" id="GO:0004826">
    <property type="term" value="F:phenylalanine-tRNA ligase activity"/>
    <property type="evidence" value="ECO:0007669"/>
    <property type="project" value="UniProtKB-UniRule"/>
</dbReference>
<dbReference type="GO" id="GO:0000049">
    <property type="term" value="F:tRNA binding"/>
    <property type="evidence" value="ECO:0007669"/>
    <property type="project" value="UniProtKB-KW"/>
</dbReference>
<dbReference type="GO" id="GO:0006432">
    <property type="term" value="P:phenylalanyl-tRNA aminoacylation"/>
    <property type="evidence" value="ECO:0007669"/>
    <property type="project" value="UniProtKB-UniRule"/>
</dbReference>
<dbReference type="CDD" id="cd00769">
    <property type="entry name" value="PheRS_beta_core"/>
    <property type="match status" value="1"/>
</dbReference>
<dbReference type="CDD" id="cd02796">
    <property type="entry name" value="tRNA_bind_bactPheRS"/>
    <property type="match status" value="1"/>
</dbReference>
<dbReference type="Gene3D" id="3.30.56.10">
    <property type="match status" value="2"/>
</dbReference>
<dbReference type="Gene3D" id="3.30.930.10">
    <property type="entry name" value="Bira Bifunctional Protein, Domain 2"/>
    <property type="match status" value="1"/>
</dbReference>
<dbReference type="Gene3D" id="3.30.70.380">
    <property type="entry name" value="Ferrodoxin-fold anticodon-binding domain"/>
    <property type="match status" value="1"/>
</dbReference>
<dbReference type="Gene3D" id="2.40.50.140">
    <property type="entry name" value="Nucleic acid-binding proteins"/>
    <property type="match status" value="1"/>
</dbReference>
<dbReference type="Gene3D" id="3.50.40.10">
    <property type="entry name" value="Phenylalanyl-trna Synthetase, Chain B, domain 3"/>
    <property type="match status" value="1"/>
</dbReference>
<dbReference type="HAMAP" id="MF_00283">
    <property type="entry name" value="Phe_tRNA_synth_beta1"/>
    <property type="match status" value="1"/>
</dbReference>
<dbReference type="InterPro" id="IPR045864">
    <property type="entry name" value="aa-tRNA-synth_II/BPL/LPL"/>
</dbReference>
<dbReference type="InterPro" id="IPR005146">
    <property type="entry name" value="B3/B4_tRNA-bd"/>
</dbReference>
<dbReference type="InterPro" id="IPR009061">
    <property type="entry name" value="DNA-bd_dom_put_sf"/>
</dbReference>
<dbReference type="InterPro" id="IPR005121">
    <property type="entry name" value="Fdx_antiC-bd"/>
</dbReference>
<dbReference type="InterPro" id="IPR036690">
    <property type="entry name" value="Fdx_antiC-bd_sf"/>
</dbReference>
<dbReference type="InterPro" id="IPR012340">
    <property type="entry name" value="NA-bd_OB-fold"/>
</dbReference>
<dbReference type="InterPro" id="IPR045060">
    <property type="entry name" value="Phe-tRNA-ligase_IIc_bsu"/>
</dbReference>
<dbReference type="InterPro" id="IPR004532">
    <property type="entry name" value="Phe-tRNA-ligase_IIc_bsu_bact"/>
</dbReference>
<dbReference type="InterPro" id="IPR020825">
    <property type="entry name" value="Phe-tRNA_synthase-like_B3/B4"/>
</dbReference>
<dbReference type="InterPro" id="IPR041616">
    <property type="entry name" value="PheRS_beta_core"/>
</dbReference>
<dbReference type="InterPro" id="IPR002547">
    <property type="entry name" value="tRNA-bd_dom"/>
</dbReference>
<dbReference type="InterPro" id="IPR033714">
    <property type="entry name" value="tRNA_bind_bactPheRS"/>
</dbReference>
<dbReference type="InterPro" id="IPR005147">
    <property type="entry name" value="tRNA_synthase_B5-dom"/>
</dbReference>
<dbReference type="NCBIfam" id="TIGR00472">
    <property type="entry name" value="pheT_bact"/>
    <property type="match status" value="1"/>
</dbReference>
<dbReference type="NCBIfam" id="NF045760">
    <property type="entry name" value="YtpR"/>
    <property type="match status" value="1"/>
</dbReference>
<dbReference type="PANTHER" id="PTHR10947:SF0">
    <property type="entry name" value="PHENYLALANINE--TRNA LIGASE BETA SUBUNIT"/>
    <property type="match status" value="1"/>
</dbReference>
<dbReference type="PANTHER" id="PTHR10947">
    <property type="entry name" value="PHENYLALANYL-TRNA SYNTHETASE BETA CHAIN AND LEUCINE-RICH REPEAT-CONTAINING PROTEIN 47"/>
    <property type="match status" value="1"/>
</dbReference>
<dbReference type="Pfam" id="PF03483">
    <property type="entry name" value="B3_4"/>
    <property type="match status" value="1"/>
</dbReference>
<dbReference type="Pfam" id="PF03484">
    <property type="entry name" value="B5"/>
    <property type="match status" value="1"/>
</dbReference>
<dbReference type="Pfam" id="PF03147">
    <property type="entry name" value="FDX-ACB"/>
    <property type="match status" value="1"/>
</dbReference>
<dbReference type="Pfam" id="PF01588">
    <property type="entry name" value="tRNA_bind"/>
    <property type="match status" value="1"/>
</dbReference>
<dbReference type="Pfam" id="PF17759">
    <property type="entry name" value="tRNA_synthFbeta"/>
    <property type="match status" value="1"/>
</dbReference>
<dbReference type="SMART" id="SM00873">
    <property type="entry name" value="B3_4"/>
    <property type="match status" value="1"/>
</dbReference>
<dbReference type="SMART" id="SM00874">
    <property type="entry name" value="B5"/>
    <property type="match status" value="1"/>
</dbReference>
<dbReference type="SMART" id="SM00896">
    <property type="entry name" value="FDX-ACB"/>
    <property type="match status" value="1"/>
</dbReference>
<dbReference type="SUPFAM" id="SSF54991">
    <property type="entry name" value="Anticodon-binding domain of PheRS"/>
    <property type="match status" value="1"/>
</dbReference>
<dbReference type="SUPFAM" id="SSF55681">
    <property type="entry name" value="Class II aaRS and biotin synthetases"/>
    <property type="match status" value="1"/>
</dbReference>
<dbReference type="SUPFAM" id="SSF50249">
    <property type="entry name" value="Nucleic acid-binding proteins"/>
    <property type="match status" value="1"/>
</dbReference>
<dbReference type="SUPFAM" id="SSF56037">
    <property type="entry name" value="PheT/TilS domain"/>
    <property type="match status" value="1"/>
</dbReference>
<dbReference type="SUPFAM" id="SSF46955">
    <property type="entry name" value="Putative DNA-binding domain"/>
    <property type="match status" value="1"/>
</dbReference>
<dbReference type="PROSITE" id="PS51483">
    <property type="entry name" value="B5"/>
    <property type="match status" value="1"/>
</dbReference>
<dbReference type="PROSITE" id="PS51447">
    <property type="entry name" value="FDX_ACB"/>
    <property type="match status" value="1"/>
</dbReference>
<dbReference type="PROSITE" id="PS50886">
    <property type="entry name" value="TRBD"/>
    <property type="match status" value="1"/>
</dbReference>
<evidence type="ECO:0000255" key="1">
    <source>
        <dbReference type="HAMAP-Rule" id="MF_00283"/>
    </source>
</evidence>
<feature type="chain" id="PRO_0000232062" description="Phenylalanine--tRNA ligase beta subunit">
    <location>
        <begin position="1"/>
        <end position="789"/>
    </location>
</feature>
<feature type="domain" description="tRNA-binding" evidence="1">
    <location>
        <begin position="38"/>
        <end position="151"/>
    </location>
</feature>
<feature type="domain" description="B5" evidence="1">
    <location>
        <begin position="398"/>
        <end position="474"/>
    </location>
</feature>
<feature type="domain" description="FDX-ACB" evidence="1">
    <location>
        <begin position="694"/>
        <end position="787"/>
    </location>
</feature>
<feature type="binding site" evidence="1">
    <location>
        <position position="452"/>
    </location>
    <ligand>
        <name>Mg(2+)</name>
        <dbReference type="ChEBI" id="CHEBI:18420"/>
        <note>shared with alpha subunit</note>
    </ligand>
</feature>
<feature type="binding site" evidence="1">
    <location>
        <position position="458"/>
    </location>
    <ligand>
        <name>Mg(2+)</name>
        <dbReference type="ChEBI" id="CHEBI:18420"/>
        <note>shared with alpha subunit</note>
    </ligand>
</feature>
<feature type="binding site" evidence="1">
    <location>
        <position position="461"/>
    </location>
    <ligand>
        <name>Mg(2+)</name>
        <dbReference type="ChEBI" id="CHEBI:18420"/>
        <note>shared with alpha subunit</note>
    </ligand>
</feature>
<feature type="binding site" evidence="1">
    <location>
        <position position="462"/>
    </location>
    <ligand>
        <name>Mg(2+)</name>
        <dbReference type="ChEBI" id="CHEBI:18420"/>
        <note>shared with alpha subunit</note>
    </ligand>
</feature>
<proteinExistence type="inferred from homology"/>